<organism>
    <name type="scientific">Saccharomyces cerevisiae (strain ATCC 204508 / S288c)</name>
    <name type="common">Baker's yeast</name>
    <dbReference type="NCBI Taxonomy" id="559292"/>
    <lineage>
        <taxon>Eukaryota</taxon>
        <taxon>Fungi</taxon>
        <taxon>Dikarya</taxon>
        <taxon>Ascomycota</taxon>
        <taxon>Saccharomycotina</taxon>
        <taxon>Saccharomycetes</taxon>
        <taxon>Saccharomycetales</taxon>
        <taxon>Saccharomycetaceae</taxon>
        <taxon>Saccharomyces</taxon>
    </lineage>
</organism>
<feature type="chain" id="PRO_0000299603" description="Regulator of rDNA transcription protein 7">
    <location>
        <begin position="1"/>
        <end position="113"/>
    </location>
</feature>
<feature type="transmembrane region" description="Helical" evidence="1">
    <location>
        <begin position="13"/>
        <end position="35"/>
    </location>
</feature>
<feature type="transmembrane region" description="Helical" evidence="1">
    <location>
        <begin position="70"/>
        <end position="92"/>
    </location>
</feature>
<feature type="sequence conflict" description="In Ref. 3; AAS56518." evidence="2" ref="3">
    <original>G</original>
    <variation>R</variation>
    <location>
        <position position="10"/>
    </location>
</feature>
<keyword id="KW-0472">Membrane</keyword>
<keyword id="KW-1185">Reference proteome</keyword>
<keyword id="KW-0812">Transmembrane</keyword>
<keyword id="KW-1133">Transmembrane helix</keyword>
<gene>
    <name type="primary">RRT7</name>
    <name type="ordered locus">YLL030C</name>
    <name type="ORF">L0932</name>
</gene>
<dbReference type="EMBL" id="Z73135">
    <property type="protein sequence ID" value="CAA97479.1"/>
    <property type="molecule type" value="Genomic_DNA"/>
</dbReference>
<dbReference type="EMBL" id="AY558192">
    <property type="protein sequence ID" value="AAS56518.1"/>
    <property type="molecule type" value="Genomic_DNA"/>
</dbReference>
<dbReference type="EMBL" id="BK006945">
    <property type="protein sequence ID" value="DAA80313.1"/>
    <property type="molecule type" value="Genomic_DNA"/>
</dbReference>
<dbReference type="PIR" id="S64781">
    <property type="entry name" value="S64781"/>
</dbReference>
<dbReference type="RefSeq" id="NP_001335793.1">
    <property type="nucleotide sequence ID" value="NM_001348853.1"/>
</dbReference>
<dbReference type="DIP" id="DIP-3898N"/>
<dbReference type="FunCoup" id="Q07829">
    <property type="interactions" value="17"/>
</dbReference>
<dbReference type="STRING" id="4932.YLL030C"/>
<dbReference type="PaxDb" id="4932-YLL030C"/>
<dbReference type="EnsemblFungi" id="YLL030C_mRNA">
    <property type="protein sequence ID" value="YLL030C"/>
    <property type="gene ID" value="YLL030C"/>
</dbReference>
<dbReference type="GeneID" id="850629"/>
<dbReference type="AGR" id="SGD:S000003953"/>
<dbReference type="SGD" id="S000003953">
    <property type="gene designation" value="RRT7"/>
</dbReference>
<dbReference type="HOGENOM" id="CLU_2135475_0_0_1"/>
<dbReference type="InParanoid" id="Q07829"/>
<dbReference type="PRO" id="PR:Q07829"/>
<dbReference type="Proteomes" id="UP000002311">
    <property type="component" value="Chromosome XII"/>
</dbReference>
<dbReference type="RNAct" id="Q07829">
    <property type="molecule type" value="protein"/>
</dbReference>
<dbReference type="GO" id="GO:0016020">
    <property type="term" value="C:membrane"/>
    <property type="evidence" value="ECO:0007669"/>
    <property type="project" value="UniProtKB-SubCell"/>
</dbReference>
<protein>
    <recommendedName>
        <fullName>Regulator of rDNA transcription protein 7</fullName>
    </recommendedName>
</protein>
<proteinExistence type="predicted"/>
<sequence>MYFAFKGLCGRRFLPIASFLTILNRILFQYWLFYNSLKEEKTFQKIFFSMNLKCRKKKEPNHIIYSQPPFLLGFMVQLQSCVKLLPLYLLFLLQGNGAHYASAMTSKVLSFFL</sequence>
<accession>Q07829</accession>
<accession>A0A1S0T088</accession>
<accession>Q6Q5D4</accession>
<comment type="function">
    <text>Identified in a screen for mutants with decreased levels of rDNA transcription.</text>
</comment>
<comment type="subcellular location">
    <subcellularLocation>
        <location evidence="2">Membrane</location>
        <topology evidence="2">Multi-pass membrane protein</topology>
    </subcellularLocation>
</comment>
<evidence type="ECO:0000255" key="1"/>
<evidence type="ECO:0000305" key="2"/>
<name>RRT7_YEAST</name>
<reference key="1">
    <citation type="journal article" date="1997" name="Nature">
        <title>The nucleotide sequence of Saccharomyces cerevisiae chromosome XII.</title>
        <authorList>
            <person name="Johnston M."/>
            <person name="Hillier L.W."/>
            <person name="Riles L."/>
            <person name="Albermann K."/>
            <person name="Andre B."/>
            <person name="Ansorge W."/>
            <person name="Benes V."/>
            <person name="Brueckner M."/>
            <person name="Delius H."/>
            <person name="Dubois E."/>
            <person name="Duesterhoeft A."/>
            <person name="Entian K.-D."/>
            <person name="Floeth M."/>
            <person name="Goffeau A."/>
            <person name="Hebling U."/>
            <person name="Heumann K."/>
            <person name="Heuss-Neitzel D."/>
            <person name="Hilbert H."/>
            <person name="Hilger F."/>
            <person name="Kleine K."/>
            <person name="Koetter P."/>
            <person name="Louis E.J."/>
            <person name="Messenguy F."/>
            <person name="Mewes H.-W."/>
            <person name="Miosga T."/>
            <person name="Moestl D."/>
            <person name="Mueller-Auer S."/>
            <person name="Nentwich U."/>
            <person name="Obermaier B."/>
            <person name="Piravandi E."/>
            <person name="Pohl T.M."/>
            <person name="Portetelle D."/>
            <person name="Purnelle B."/>
            <person name="Rechmann S."/>
            <person name="Rieger M."/>
            <person name="Rinke M."/>
            <person name="Rose M."/>
            <person name="Scharfe M."/>
            <person name="Scherens B."/>
            <person name="Scholler P."/>
            <person name="Schwager C."/>
            <person name="Schwarz S."/>
            <person name="Underwood A.P."/>
            <person name="Urrestarazu L.A."/>
            <person name="Vandenbol M."/>
            <person name="Verhasselt P."/>
            <person name="Vierendeels F."/>
            <person name="Voet M."/>
            <person name="Volckaert G."/>
            <person name="Voss H."/>
            <person name="Wambutt R."/>
            <person name="Wedler E."/>
            <person name="Wedler H."/>
            <person name="Zimmermann F.K."/>
            <person name="Zollner A."/>
            <person name="Hani J."/>
            <person name="Hoheisel J.D."/>
        </authorList>
    </citation>
    <scope>NUCLEOTIDE SEQUENCE [LARGE SCALE GENOMIC DNA]</scope>
    <source>
        <strain>ATCC 204508 / S288c</strain>
    </source>
</reference>
<reference key="2">
    <citation type="journal article" date="2014" name="G3 (Bethesda)">
        <title>The reference genome sequence of Saccharomyces cerevisiae: Then and now.</title>
        <authorList>
            <person name="Engel S.R."/>
            <person name="Dietrich F.S."/>
            <person name="Fisk D.G."/>
            <person name="Binkley G."/>
            <person name="Balakrishnan R."/>
            <person name="Costanzo M.C."/>
            <person name="Dwight S.S."/>
            <person name="Hitz B.C."/>
            <person name="Karra K."/>
            <person name="Nash R.S."/>
            <person name="Weng S."/>
            <person name="Wong E.D."/>
            <person name="Lloyd P."/>
            <person name="Skrzypek M.S."/>
            <person name="Miyasato S.R."/>
            <person name="Simison M."/>
            <person name="Cherry J.M."/>
        </authorList>
    </citation>
    <scope>GENOME REANNOTATION</scope>
    <source>
        <strain>ATCC 204508 / S288c</strain>
    </source>
</reference>
<reference key="3">
    <citation type="journal article" date="2007" name="Genome Res.">
        <title>Approaching a complete repository of sequence-verified protein-encoding clones for Saccharomyces cerevisiae.</title>
        <authorList>
            <person name="Hu Y."/>
            <person name="Rolfs A."/>
            <person name="Bhullar B."/>
            <person name="Murthy T.V.S."/>
            <person name="Zhu C."/>
            <person name="Berger M.F."/>
            <person name="Camargo A.A."/>
            <person name="Kelley F."/>
            <person name="McCarron S."/>
            <person name="Jepson D."/>
            <person name="Richardson A."/>
            <person name="Raphael J."/>
            <person name="Moreira D."/>
            <person name="Taycher E."/>
            <person name="Zuo D."/>
            <person name="Mohr S."/>
            <person name="Kane M.F."/>
            <person name="Williamson J."/>
            <person name="Simpson A.J.G."/>
            <person name="Bulyk M.L."/>
            <person name="Harlow E."/>
            <person name="Marsischky G."/>
            <person name="Kolodner R.D."/>
            <person name="LaBaer J."/>
        </authorList>
    </citation>
    <scope>NUCLEOTIDE SEQUENCE [GENOMIC DNA]</scope>
    <source>
        <strain>ATCC 204508 / S288c</strain>
    </source>
</reference>
<reference key="4">
    <citation type="journal article" date="2009" name="Genetics">
        <title>Genetic identification of factors that modulate ribosomal DNA transcription in Saccharomyces cerevisiae.</title>
        <authorList>
            <person name="Hontz R.D."/>
            <person name="Niederer R.O."/>
            <person name="Johnson J.M."/>
            <person name="Smith J.S."/>
        </authorList>
    </citation>
    <scope>GENE NAME</scope>
</reference>